<gene>
    <name evidence="1" type="primary">ftsH</name>
    <name type="ordered locus">MPN_671</name>
    <name type="ORF">MP171</name>
</gene>
<organism>
    <name type="scientific">Mycoplasma pneumoniae (strain ATCC 29342 / M129 / Subtype 1)</name>
    <name type="common">Mycoplasmoides pneumoniae</name>
    <dbReference type="NCBI Taxonomy" id="272634"/>
    <lineage>
        <taxon>Bacteria</taxon>
        <taxon>Bacillati</taxon>
        <taxon>Mycoplasmatota</taxon>
        <taxon>Mycoplasmoidales</taxon>
        <taxon>Mycoplasmoidaceae</taxon>
        <taxon>Mycoplasmoides</taxon>
    </lineage>
</organism>
<evidence type="ECO:0000255" key="1">
    <source>
        <dbReference type="HAMAP-Rule" id="MF_01458"/>
    </source>
</evidence>
<evidence type="ECO:0000256" key="2">
    <source>
        <dbReference type="SAM" id="MobiDB-lite"/>
    </source>
</evidence>
<proteinExistence type="inferred from homology"/>
<feature type="chain" id="PRO_0000084640" description="ATP-dependent zinc metalloprotease FtsH">
    <location>
        <begin position="1"/>
        <end position="709"/>
    </location>
</feature>
<feature type="topological domain" description="Cytoplasmic" evidence="1">
    <location>
        <begin position="1"/>
        <end position="25"/>
    </location>
</feature>
<feature type="transmembrane region" description="Helical" evidence="1">
    <location>
        <begin position="26"/>
        <end position="46"/>
    </location>
</feature>
<feature type="topological domain" description="Extracellular" evidence="1">
    <location>
        <begin position="47"/>
        <end position="171"/>
    </location>
</feature>
<feature type="transmembrane region" description="Helical" evidence="1">
    <location>
        <begin position="172"/>
        <end position="192"/>
    </location>
</feature>
<feature type="topological domain" description="Cytoplasmic" evidence="1">
    <location>
        <begin position="193"/>
        <end position="709"/>
    </location>
</feature>
<feature type="region of interest" description="Disordered" evidence="2">
    <location>
        <begin position="673"/>
        <end position="709"/>
    </location>
</feature>
<feature type="compositionally biased region" description="Basic and acidic residues" evidence="2">
    <location>
        <begin position="680"/>
        <end position="709"/>
    </location>
</feature>
<feature type="active site" evidence="1">
    <location>
        <position position="491"/>
    </location>
</feature>
<feature type="binding site" evidence="1">
    <location>
        <begin position="268"/>
        <end position="275"/>
    </location>
    <ligand>
        <name>ATP</name>
        <dbReference type="ChEBI" id="CHEBI:30616"/>
    </ligand>
</feature>
<feature type="binding site" evidence="1">
    <location>
        <position position="490"/>
    </location>
    <ligand>
        <name>Zn(2+)</name>
        <dbReference type="ChEBI" id="CHEBI:29105"/>
        <note>catalytic</note>
    </ligand>
</feature>
<feature type="binding site" evidence="1">
    <location>
        <position position="494"/>
    </location>
    <ligand>
        <name>Zn(2+)</name>
        <dbReference type="ChEBI" id="CHEBI:29105"/>
        <note>catalytic</note>
    </ligand>
</feature>
<feature type="binding site" evidence="1">
    <location>
        <position position="569"/>
    </location>
    <ligand>
        <name>Zn(2+)</name>
        <dbReference type="ChEBI" id="CHEBI:29105"/>
        <note>catalytic</note>
    </ligand>
</feature>
<sequence>MKKNKGLNEATTSEKPQFPKRTAWKIFWWVVILAIIIGILVYILMPRATTAVIEKWELSGTTLSAQIKGLSGKHTFQRINNSTYVTDDILQVSISFQGINPIVVTAHKATNGSGETIFNIANLSINQSTGKAIVNGMMTQDQKSNNGTELASIKGLHDIGTFVAPDTRARDVLNIFFGLLPIIIFVIFFLLFWRSARGISGGGRSEEDNIFSIGKTQAKLAKSSVRFDNIAGLQEEKHELLEIVDYLKNPLKYAQMGARSPRGVILYGPPGTGKTLLAKAVAGEAGVPFFQSTGSGFEDMLVGVGAKRVRDLFNKAKKAAPCIIFIDEIDSVGSKRGRVELSSYSVVEQTLNQLLAEMDGFTSRTGVVVMAATNRLDVLDDALLRPGRFDRHIQINLPDIKEREGILQVHAKNKNLSSKISLLDVAKRTPGFSGAQLENVINEATLLAVRDNRTTINMNDIDEAIDRVIAGPAKKSRVVSDADRKLVAYHEAGHALVGLHVHSNDEVQKITIIPRGQAGGYTLSTPKSGDLNLKRKSDLLAMIATAMGGRAAEEEIYGPLEITTGASSDFYKATNIARAMVTQLGMSKLGQVQYVPSQGTVPPGTKLFSEQTAKDIDFEINAIIEEQYKKARTIIKTNRKELELLVEALLIAETILKSDIDYIHEHTKLPPEILAQKQEQQAKQKAEAKEAKLNKKTEKDTEKDSETNS</sequence>
<comment type="function">
    <text evidence="1">Acts as a processive, ATP-dependent zinc metallopeptidase for both cytoplasmic and membrane proteins. Plays a role in the quality control of integral membrane proteins.</text>
</comment>
<comment type="cofactor">
    <cofactor evidence="1">
        <name>Zn(2+)</name>
        <dbReference type="ChEBI" id="CHEBI:29105"/>
    </cofactor>
    <text evidence="1">Binds 1 zinc ion per subunit.</text>
</comment>
<comment type="subunit">
    <text evidence="1">Homohexamer.</text>
</comment>
<comment type="subcellular location">
    <subcellularLocation>
        <location evidence="1">Cell membrane</location>
        <topology evidence="1">Multi-pass membrane protein</topology>
        <orientation evidence="1">Cytoplasmic side</orientation>
    </subcellularLocation>
</comment>
<comment type="similarity">
    <text evidence="1">In the central section; belongs to the AAA ATPase family.</text>
</comment>
<comment type="similarity">
    <text evidence="1">In the C-terminal section; belongs to the peptidase M41 family.</text>
</comment>
<reference key="1">
    <citation type="journal article" date="1996" name="Nucleic Acids Res.">
        <title>Complete sequence analysis of the genome of the bacterium Mycoplasma pneumoniae.</title>
        <authorList>
            <person name="Himmelreich R."/>
            <person name="Hilbert H."/>
            <person name="Plagens H."/>
            <person name="Pirkl E."/>
            <person name="Li B.-C."/>
            <person name="Herrmann R."/>
        </authorList>
    </citation>
    <scope>NUCLEOTIDE SEQUENCE [LARGE SCALE GENOMIC DNA]</scope>
    <source>
        <strain>ATCC 29342 / M129 / Subtype 1</strain>
    </source>
</reference>
<reference key="2">
    <citation type="journal article" date="1994" name="Mol. Microbiol.">
        <title>Identification and characterization of hitherto unknown Mycoplasma pneumoniae proteins.</title>
        <authorList>
            <person name="Proft T."/>
            <person name="Herrmann R."/>
        </authorList>
    </citation>
    <scope>NUCLEOTIDE SEQUENCE [GENOMIC DNA] OF 530-585</scope>
    <source>
        <strain>ATCC 29342 / M129 / Subtype 1</strain>
    </source>
</reference>
<protein>
    <recommendedName>
        <fullName evidence="1">ATP-dependent zinc metalloprotease FtsH</fullName>
        <ecNumber evidence="1">3.4.24.-</ecNumber>
    </recommendedName>
</protein>
<keyword id="KW-0067">ATP-binding</keyword>
<keyword id="KW-1003">Cell membrane</keyword>
<keyword id="KW-0378">Hydrolase</keyword>
<keyword id="KW-0472">Membrane</keyword>
<keyword id="KW-0479">Metal-binding</keyword>
<keyword id="KW-0482">Metalloprotease</keyword>
<keyword id="KW-0547">Nucleotide-binding</keyword>
<keyword id="KW-0645">Protease</keyword>
<keyword id="KW-1185">Reference proteome</keyword>
<keyword id="KW-0812">Transmembrane</keyword>
<keyword id="KW-1133">Transmembrane helix</keyword>
<keyword id="KW-0862">Zinc</keyword>
<accession>P75120</accession>
<accession>Q50345</accession>
<dbReference type="EC" id="3.4.24.-" evidence="1"/>
<dbReference type="EMBL" id="U00089">
    <property type="protein sequence ID" value="AAB95819.1"/>
    <property type="molecule type" value="Genomic_DNA"/>
</dbReference>
<dbReference type="EMBL" id="Z32663">
    <property type="protein sequence ID" value="CAA83582.1"/>
    <property type="molecule type" value="Genomic_DNA"/>
</dbReference>
<dbReference type="PIR" id="S73497">
    <property type="entry name" value="S73497"/>
</dbReference>
<dbReference type="RefSeq" id="NP_110360.1">
    <property type="nucleotide sequence ID" value="NC_000912.1"/>
</dbReference>
<dbReference type="RefSeq" id="WP_010875028.1">
    <property type="nucleotide sequence ID" value="NZ_OU342337.1"/>
</dbReference>
<dbReference type="SMR" id="P75120"/>
<dbReference type="STRING" id="272634.MPN_671"/>
<dbReference type="EnsemblBacteria" id="AAB95819">
    <property type="protein sequence ID" value="AAB95819"/>
    <property type="gene ID" value="MPN_671"/>
</dbReference>
<dbReference type="GeneID" id="66608640"/>
<dbReference type="KEGG" id="mpn:MPN_671"/>
<dbReference type="PATRIC" id="fig|272634.6.peg.737"/>
<dbReference type="HOGENOM" id="CLU_000688_16_2_14"/>
<dbReference type="OrthoDB" id="9809379at2"/>
<dbReference type="BioCyc" id="MPNE272634:G1GJ3-1074-MONOMER"/>
<dbReference type="Proteomes" id="UP000000808">
    <property type="component" value="Chromosome"/>
</dbReference>
<dbReference type="GO" id="GO:0005886">
    <property type="term" value="C:plasma membrane"/>
    <property type="evidence" value="ECO:0007669"/>
    <property type="project" value="UniProtKB-SubCell"/>
</dbReference>
<dbReference type="GO" id="GO:0005524">
    <property type="term" value="F:ATP binding"/>
    <property type="evidence" value="ECO:0007669"/>
    <property type="project" value="UniProtKB-UniRule"/>
</dbReference>
<dbReference type="GO" id="GO:0016887">
    <property type="term" value="F:ATP hydrolysis activity"/>
    <property type="evidence" value="ECO:0007669"/>
    <property type="project" value="UniProtKB-UniRule"/>
</dbReference>
<dbReference type="GO" id="GO:0004176">
    <property type="term" value="F:ATP-dependent peptidase activity"/>
    <property type="evidence" value="ECO:0007669"/>
    <property type="project" value="InterPro"/>
</dbReference>
<dbReference type="GO" id="GO:0004222">
    <property type="term" value="F:metalloendopeptidase activity"/>
    <property type="evidence" value="ECO:0007669"/>
    <property type="project" value="InterPro"/>
</dbReference>
<dbReference type="GO" id="GO:0008270">
    <property type="term" value="F:zinc ion binding"/>
    <property type="evidence" value="ECO:0007669"/>
    <property type="project" value="UniProtKB-UniRule"/>
</dbReference>
<dbReference type="GO" id="GO:0030163">
    <property type="term" value="P:protein catabolic process"/>
    <property type="evidence" value="ECO:0007669"/>
    <property type="project" value="UniProtKB-UniRule"/>
</dbReference>
<dbReference type="GO" id="GO:0006508">
    <property type="term" value="P:proteolysis"/>
    <property type="evidence" value="ECO:0007669"/>
    <property type="project" value="UniProtKB-KW"/>
</dbReference>
<dbReference type="CDD" id="cd19501">
    <property type="entry name" value="RecA-like_FtsH"/>
    <property type="match status" value="1"/>
</dbReference>
<dbReference type="FunFam" id="1.10.8.60:FF:000001">
    <property type="entry name" value="ATP-dependent zinc metalloprotease FtsH"/>
    <property type="match status" value="1"/>
</dbReference>
<dbReference type="FunFam" id="1.20.58.760:FF:000026">
    <property type="entry name" value="ATP-dependent zinc metalloprotease FtsH"/>
    <property type="match status" value="1"/>
</dbReference>
<dbReference type="FunFam" id="3.40.50.300:FF:000352">
    <property type="entry name" value="ATP-dependent zinc metalloprotease FTSH 7, chloroplastic"/>
    <property type="match status" value="1"/>
</dbReference>
<dbReference type="Gene3D" id="1.10.8.60">
    <property type="match status" value="1"/>
</dbReference>
<dbReference type="Gene3D" id="3.40.50.300">
    <property type="entry name" value="P-loop containing nucleotide triphosphate hydrolases"/>
    <property type="match status" value="1"/>
</dbReference>
<dbReference type="Gene3D" id="1.20.58.760">
    <property type="entry name" value="Peptidase M41"/>
    <property type="match status" value="1"/>
</dbReference>
<dbReference type="HAMAP" id="MF_01458">
    <property type="entry name" value="FtsH"/>
    <property type="match status" value="1"/>
</dbReference>
<dbReference type="InterPro" id="IPR003593">
    <property type="entry name" value="AAA+_ATPase"/>
</dbReference>
<dbReference type="InterPro" id="IPR041569">
    <property type="entry name" value="AAA_lid_3"/>
</dbReference>
<dbReference type="InterPro" id="IPR003959">
    <property type="entry name" value="ATPase_AAA_core"/>
</dbReference>
<dbReference type="InterPro" id="IPR003960">
    <property type="entry name" value="ATPase_AAA_CS"/>
</dbReference>
<dbReference type="InterPro" id="IPR005936">
    <property type="entry name" value="FtsH"/>
</dbReference>
<dbReference type="InterPro" id="IPR027417">
    <property type="entry name" value="P-loop_NTPase"/>
</dbReference>
<dbReference type="InterPro" id="IPR000642">
    <property type="entry name" value="Peptidase_M41"/>
</dbReference>
<dbReference type="InterPro" id="IPR037219">
    <property type="entry name" value="Peptidase_M41-like"/>
</dbReference>
<dbReference type="NCBIfam" id="TIGR01241">
    <property type="entry name" value="FtsH_fam"/>
    <property type="match status" value="1"/>
</dbReference>
<dbReference type="PANTHER" id="PTHR23076:SF97">
    <property type="entry name" value="ATP-DEPENDENT ZINC METALLOPROTEASE YME1L1"/>
    <property type="match status" value="1"/>
</dbReference>
<dbReference type="PANTHER" id="PTHR23076">
    <property type="entry name" value="METALLOPROTEASE M41 FTSH"/>
    <property type="match status" value="1"/>
</dbReference>
<dbReference type="Pfam" id="PF00004">
    <property type="entry name" value="AAA"/>
    <property type="match status" value="1"/>
</dbReference>
<dbReference type="Pfam" id="PF17862">
    <property type="entry name" value="AAA_lid_3"/>
    <property type="match status" value="1"/>
</dbReference>
<dbReference type="Pfam" id="PF01434">
    <property type="entry name" value="Peptidase_M41"/>
    <property type="match status" value="1"/>
</dbReference>
<dbReference type="SMART" id="SM00382">
    <property type="entry name" value="AAA"/>
    <property type="match status" value="1"/>
</dbReference>
<dbReference type="SUPFAM" id="SSF140990">
    <property type="entry name" value="FtsH protease domain-like"/>
    <property type="match status" value="1"/>
</dbReference>
<dbReference type="SUPFAM" id="SSF52540">
    <property type="entry name" value="P-loop containing nucleoside triphosphate hydrolases"/>
    <property type="match status" value="1"/>
</dbReference>
<dbReference type="PROSITE" id="PS00674">
    <property type="entry name" value="AAA"/>
    <property type="match status" value="1"/>
</dbReference>
<name>FTSH_MYCPN</name>